<sequence length="96" mass="10509">MKIAITMAVVMLSVCCSSASSDTCPGFFQVLEFLFMGSESSYEAALKFYNPGSDLQDSGTQLKKLVDTLPQKTRMNIMKLSEIILTSPLCNQDLSV</sequence>
<accession>Q8VD96</accession>
<name>UTER_MESAU</name>
<evidence type="ECO:0000250" key="1"/>
<evidence type="ECO:0000250" key="2">
    <source>
        <dbReference type="UniProtKB" id="P11684"/>
    </source>
</evidence>
<evidence type="ECO:0000255" key="3"/>
<evidence type="ECO:0000305" key="4"/>
<protein>
    <recommendedName>
        <fullName>Uteroglobin</fullName>
    </recommendedName>
    <alternativeName>
        <fullName>Club cell 10 kDa protein</fullName>
        <shortName>CC10</shortName>
    </alternativeName>
    <alternativeName>
        <fullName>Secretoglobin family 1A member 1</fullName>
    </alternativeName>
</protein>
<comment type="function">
    <text evidence="1">Binds phosphatidylcholine, phosphatidylinositol, polychlorinated biphenyls (PCB) and weakly progesterone, potent inhibitor of phospholipase A2.</text>
</comment>
<comment type="subunit">
    <text evidence="2">Antiparallel homodimer; disulfide-linked (By similarity). Interaction with LMBR1L is controversial (By similarity).</text>
</comment>
<comment type="subcellular location">
    <subcellularLocation>
        <location>Secreted</location>
    </subcellularLocation>
</comment>
<comment type="similarity">
    <text evidence="4">Belongs to the secretoglobin family.</text>
</comment>
<keyword id="KW-1015">Disulfide bond</keyword>
<keyword id="KW-0593">Phospholipase A2 inhibitor</keyword>
<keyword id="KW-1185">Reference proteome</keyword>
<keyword id="KW-0964">Secreted</keyword>
<keyword id="KW-0732">Signal</keyword>
<proteinExistence type="inferred from homology"/>
<feature type="signal peptide" evidence="3">
    <location>
        <begin position="1"/>
        <end position="21"/>
    </location>
</feature>
<feature type="chain" id="PRO_0000223334" description="Uteroglobin">
    <location>
        <begin position="22"/>
        <end position="96"/>
    </location>
</feature>
<feature type="disulfide bond" description="Interchain (with C-90)" evidence="1">
    <location>
        <position position="24"/>
    </location>
</feature>
<feature type="disulfide bond" description="Interchain (with C-24)" evidence="1">
    <location>
        <position position="90"/>
    </location>
</feature>
<dbReference type="EMBL" id="L37041">
    <property type="protein sequence ID" value="AAL31349.1"/>
    <property type="molecule type" value="Genomic_DNA"/>
</dbReference>
<dbReference type="SMR" id="Q8VD96"/>
<dbReference type="OrthoDB" id="9585556at2759"/>
<dbReference type="Proteomes" id="UP000189706">
    <property type="component" value="Unplaced"/>
</dbReference>
<dbReference type="GO" id="GO:0005737">
    <property type="term" value="C:cytoplasm"/>
    <property type="evidence" value="ECO:0007669"/>
    <property type="project" value="TreeGrafter"/>
</dbReference>
<dbReference type="GO" id="GO:0005615">
    <property type="term" value="C:extracellular space"/>
    <property type="evidence" value="ECO:0007669"/>
    <property type="project" value="TreeGrafter"/>
</dbReference>
<dbReference type="GO" id="GO:0019834">
    <property type="term" value="F:phospholipase A2 inhibitor activity"/>
    <property type="evidence" value="ECO:0007669"/>
    <property type="project" value="UniProtKB-KW"/>
</dbReference>
<dbReference type="GO" id="GO:0007165">
    <property type="term" value="P:signal transduction"/>
    <property type="evidence" value="ECO:0007669"/>
    <property type="project" value="InterPro"/>
</dbReference>
<dbReference type="CDD" id="cd00633">
    <property type="entry name" value="Secretoglobin"/>
    <property type="match status" value="1"/>
</dbReference>
<dbReference type="FunFam" id="1.10.210.10:FF:000001">
    <property type="entry name" value="Uteroglobin"/>
    <property type="match status" value="1"/>
</dbReference>
<dbReference type="Gene3D" id="1.10.210.10">
    <property type="entry name" value="Secretoglobin"/>
    <property type="match status" value="1"/>
</dbReference>
<dbReference type="InterPro" id="IPR016126">
    <property type="entry name" value="Secretoglobin"/>
</dbReference>
<dbReference type="InterPro" id="IPR043215">
    <property type="entry name" value="Secretoglobin_1C-like"/>
</dbReference>
<dbReference type="InterPro" id="IPR035960">
    <property type="entry name" value="Secretoglobin_sf"/>
</dbReference>
<dbReference type="InterPro" id="IPR000329">
    <property type="entry name" value="Uteroglobin"/>
</dbReference>
<dbReference type="PANTHER" id="PTHR10136">
    <property type="entry name" value="SECRETOGLOBIN FAMILY 1 MEMBER"/>
    <property type="match status" value="1"/>
</dbReference>
<dbReference type="PANTHER" id="PTHR10136:SF6">
    <property type="entry name" value="UTEROGLOBIN"/>
    <property type="match status" value="1"/>
</dbReference>
<dbReference type="Pfam" id="PF01099">
    <property type="entry name" value="Uteroglobin"/>
    <property type="match status" value="1"/>
</dbReference>
<dbReference type="PRINTS" id="PR00486">
    <property type="entry name" value="UTEROGLOBIN"/>
</dbReference>
<dbReference type="SMART" id="SM00096">
    <property type="entry name" value="UTG"/>
    <property type="match status" value="1"/>
</dbReference>
<dbReference type="SUPFAM" id="SSF48201">
    <property type="entry name" value="Uteroglobin-like"/>
    <property type="match status" value="1"/>
</dbReference>
<dbReference type="PROSITE" id="PS51311">
    <property type="entry name" value="SCGB"/>
    <property type="match status" value="1"/>
</dbReference>
<gene>
    <name type="primary">SCGB1A1</name>
    <name type="synonym">CC10</name>
</gene>
<organism>
    <name type="scientific">Mesocricetus auratus</name>
    <name type="common">Golden hamster</name>
    <dbReference type="NCBI Taxonomy" id="10036"/>
    <lineage>
        <taxon>Eukaryota</taxon>
        <taxon>Metazoa</taxon>
        <taxon>Chordata</taxon>
        <taxon>Craniata</taxon>
        <taxon>Vertebrata</taxon>
        <taxon>Euteleostomi</taxon>
        <taxon>Mammalia</taxon>
        <taxon>Eutheria</taxon>
        <taxon>Euarchontoglires</taxon>
        <taxon>Glires</taxon>
        <taxon>Rodentia</taxon>
        <taxon>Myomorpha</taxon>
        <taxon>Muroidea</taxon>
        <taxon>Cricetidae</taxon>
        <taxon>Cricetinae</taxon>
        <taxon>Mesocricetus</taxon>
    </lineage>
</organism>
<reference key="1">
    <citation type="submission" date="2001-11" db="EMBL/GenBank/DDBJ databases">
        <title>Cloning and sequencing of a cDNA encoding hamster uteroglobin/clara cell 10 kDa protein.</title>
        <authorList>
            <person name="Gutierrez-Sagal R."/>
            <person name="Nieto A."/>
        </authorList>
    </citation>
    <scope>NUCLEOTIDE SEQUENCE [GENOMIC DNA]</scope>
    <source>
        <tissue>Lung</tissue>
    </source>
</reference>